<sequence length="143" mass="16068">MFLGSHTPRLDDKGRLTLPAKFRDELEGGLVITKGQERCLYVFPMAEFTRISESLRTAPVTAKALRDYSRVFFSSAADDAPDRQGRITIPAPLRTYAGLTRDCVVNGANTRVEIWDAQRWQAYLESQEESFAELSEEVLPGVI</sequence>
<protein>
    <recommendedName>
        <fullName>Transcriptional regulator MraZ</fullName>
    </recommendedName>
</protein>
<gene>
    <name evidence="1" type="primary">mraZ</name>
    <name type="ordered locus">FRAAL2187</name>
</gene>
<organism>
    <name type="scientific">Frankia alni (strain DSM 45986 / CECT 9034 / ACN14a)</name>
    <dbReference type="NCBI Taxonomy" id="326424"/>
    <lineage>
        <taxon>Bacteria</taxon>
        <taxon>Bacillati</taxon>
        <taxon>Actinomycetota</taxon>
        <taxon>Actinomycetes</taxon>
        <taxon>Frankiales</taxon>
        <taxon>Frankiaceae</taxon>
        <taxon>Frankia</taxon>
    </lineage>
</organism>
<evidence type="ECO:0000255" key="1">
    <source>
        <dbReference type="HAMAP-Rule" id="MF_01008"/>
    </source>
</evidence>
<evidence type="ECO:0000255" key="2">
    <source>
        <dbReference type="PROSITE-ProRule" id="PRU01076"/>
    </source>
</evidence>
<evidence type="ECO:0000305" key="3"/>
<keyword id="KW-0963">Cytoplasm</keyword>
<keyword id="KW-0238">DNA-binding</keyword>
<keyword id="KW-1185">Reference proteome</keyword>
<keyword id="KW-0677">Repeat</keyword>
<keyword id="KW-0804">Transcription</keyword>
<keyword id="KW-0805">Transcription regulation</keyword>
<proteinExistence type="inferred from homology"/>
<accession>Q0RNQ0</accession>
<reference key="1">
    <citation type="journal article" date="2007" name="Genome Res.">
        <title>Genome characteristics of facultatively symbiotic Frankia sp. strains reflect host range and host plant biogeography.</title>
        <authorList>
            <person name="Normand P."/>
            <person name="Lapierre P."/>
            <person name="Tisa L.S."/>
            <person name="Gogarten J.P."/>
            <person name="Alloisio N."/>
            <person name="Bagnarol E."/>
            <person name="Bassi C.A."/>
            <person name="Berry A.M."/>
            <person name="Bickhart D.M."/>
            <person name="Choisne N."/>
            <person name="Couloux A."/>
            <person name="Cournoyer B."/>
            <person name="Cruveiller S."/>
            <person name="Daubin V."/>
            <person name="Demange N."/>
            <person name="Francino M.P."/>
            <person name="Goltsman E."/>
            <person name="Huang Y."/>
            <person name="Kopp O.R."/>
            <person name="Labarre L."/>
            <person name="Lapidus A."/>
            <person name="Lavire C."/>
            <person name="Marechal J."/>
            <person name="Martinez M."/>
            <person name="Mastronunzio J.E."/>
            <person name="Mullin B.C."/>
            <person name="Niemann J."/>
            <person name="Pujic P."/>
            <person name="Rawnsley T."/>
            <person name="Rouy Z."/>
            <person name="Schenowitz C."/>
            <person name="Sellstedt A."/>
            <person name="Tavares F."/>
            <person name="Tomkins J.P."/>
            <person name="Vallenet D."/>
            <person name="Valverde C."/>
            <person name="Wall L.G."/>
            <person name="Wang Y."/>
            <person name="Medigue C."/>
            <person name="Benson D.R."/>
        </authorList>
    </citation>
    <scope>NUCLEOTIDE SEQUENCE [LARGE SCALE GENOMIC DNA]</scope>
    <source>
        <strain>DSM 45986 / CECT 9034 / ACN14a</strain>
    </source>
</reference>
<feature type="chain" id="PRO_0000318885" description="Transcriptional regulator MraZ">
    <location>
        <begin position="1"/>
        <end position="143"/>
    </location>
</feature>
<feature type="domain" description="SpoVT-AbrB 1" evidence="2">
    <location>
        <begin position="5"/>
        <end position="47"/>
    </location>
</feature>
<feature type="domain" description="SpoVT-AbrB 2" evidence="2">
    <location>
        <begin position="76"/>
        <end position="119"/>
    </location>
</feature>
<dbReference type="EMBL" id="CT573213">
    <property type="protein sequence ID" value="CAJ60836.1"/>
    <property type="status" value="ALT_INIT"/>
    <property type="molecule type" value="Genomic_DNA"/>
</dbReference>
<dbReference type="RefSeq" id="WP_009739579.1">
    <property type="nucleotide sequence ID" value="NC_008278.1"/>
</dbReference>
<dbReference type="SMR" id="Q0RNQ0"/>
<dbReference type="STRING" id="326424.FRAAL2187"/>
<dbReference type="KEGG" id="fal:FRAAL2187"/>
<dbReference type="eggNOG" id="COG2001">
    <property type="taxonomic scope" value="Bacteria"/>
</dbReference>
<dbReference type="HOGENOM" id="CLU_107907_0_5_11"/>
<dbReference type="OrthoDB" id="9807753at2"/>
<dbReference type="Proteomes" id="UP000000657">
    <property type="component" value="Chromosome"/>
</dbReference>
<dbReference type="GO" id="GO:0005737">
    <property type="term" value="C:cytoplasm"/>
    <property type="evidence" value="ECO:0007669"/>
    <property type="project" value="UniProtKB-UniRule"/>
</dbReference>
<dbReference type="GO" id="GO:0009295">
    <property type="term" value="C:nucleoid"/>
    <property type="evidence" value="ECO:0007669"/>
    <property type="project" value="UniProtKB-SubCell"/>
</dbReference>
<dbReference type="GO" id="GO:0003700">
    <property type="term" value="F:DNA-binding transcription factor activity"/>
    <property type="evidence" value="ECO:0007669"/>
    <property type="project" value="UniProtKB-UniRule"/>
</dbReference>
<dbReference type="GO" id="GO:0000976">
    <property type="term" value="F:transcription cis-regulatory region binding"/>
    <property type="evidence" value="ECO:0007669"/>
    <property type="project" value="TreeGrafter"/>
</dbReference>
<dbReference type="GO" id="GO:2000143">
    <property type="term" value="P:negative regulation of DNA-templated transcription initiation"/>
    <property type="evidence" value="ECO:0007669"/>
    <property type="project" value="TreeGrafter"/>
</dbReference>
<dbReference type="CDD" id="cd16321">
    <property type="entry name" value="MraZ_C"/>
    <property type="match status" value="1"/>
</dbReference>
<dbReference type="CDD" id="cd16320">
    <property type="entry name" value="MraZ_N"/>
    <property type="match status" value="1"/>
</dbReference>
<dbReference type="Gene3D" id="3.40.1550.20">
    <property type="entry name" value="Transcriptional regulator MraZ domain"/>
    <property type="match status" value="1"/>
</dbReference>
<dbReference type="HAMAP" id="MF_01008">
    <property type="entry name" value="MraZ"/>
    <property type="match status" value="1"/>
</dbReference>
<dbReference type="InterPro" id="IPR003444">
    <property type="entry name" value="MraZ"/>
</dbReference>
<dbReference type="InterPro" id="IPR035644">
    <property type="entry name" value="MraZ_C"/>
</dbReference>
<dbReference type="InterPro" id="IPR020603">
    <property type="entry name" value="MraZ_dom"/>
</dbReference>
<dbReference type="InterPro" id="IPR035642">
    <property type="entry name" value="MraZ_N"/>
</dbReference>
<dbReference type="InterPro" id="IPR038619">
    <property type="entry name" value="MraZ_sf"/>
</dbReference>
<dbReference type="InterPro" id="IPR007159">
    <property type="entry name" value="SpoVT-AbrB_dom"/>
</dbReference>
<dbReference type="InterPro" id="IPR037914">
    <property type="entry name" value="SpoVT-AbrB_sf"/>
</dbReference>
<dbReference type="NCBIfam" id="TIGR00242">
    <property type="entry name" value="division/cell wall cluster transcriptional repressor MraZ"/>
    <property type="match status" value="1"/>
</dbReference>
<dbReference type="PANTHER" id="PTHR34701">
    <property type="entry name" value="TRANSCRIPTIONAL REGULATOR MRAZ"/>
    <property type="match status" value="1"/>
</dbReference>
<dbReference type="PANTHER" id="PTHR34701:SF1">
    <property type="entry name" value="TRANSCRIPTIONAL REGULATOR MRAZ"/>
    <property type="match status" value="1"/>
</dbReference>
<dbReference type="Pfam" id="PF02381">
    <property type="entry name" value="MraZ"/>
    <property type="match status" value="2"/>
</dbReference>
<dbReference type="SUPFAM" id="SSF89447">
    <property type="entry name" value="AbrB/MazE/MraZ-like"/>
    <property type="match status" value="1"/>
</dbReference>
<dbReference type="PROSITE" id="PS51740">
    <property type="entry name" value="SPOVT_ABRB"/>
    <property type="match status" value="2"/>
</dbReference>
<comment type="subunit">
    <text evidence="1">Forms oligomers.</text>
</comment>
<comment type="subcellular location">
    <subcellularLocation>
        <location evidence="1">Cytoplasm</location>
        <location evidence="1">Nucleoid</location>
    </subcellularLocation>
</comment>
<comment type="similarity">
    <text evidence="1">Belongs to the MraZ family.</text>
</comment>
<comment type="sequence caution" evidence="3">
    <conflict type="erroneous initiation">
        <sequence resource="EMBL-CDS" id="CAJ60836"/>
    </conflict>
</comment>
<name>MRAZ_FRAAA</name>